<reference key="1">
    <citation type="journal article" date="2006" name="Proc. Natl. Acad. Sci. U.S.A.">
        <title>Molecular genetic anatomy of inter- and intraserotype variation in the human bacterial pathogen group A Streptococcus.</title>
        <authorList>
            <person name="Beres S.B."/>
            <person name="Richter E.W."/>
            <person name="Nagiec M.J."/>
            <person name="Sumby P."/>
            <person name="Porcella S.F."/>
            <person name="DeLeo F.R."/>
            <person name="Musser J.M."/>
        </authorList>
    </citation>
    <scope>NUCLEOTIDE SEQUENCE [LARGE SCALE GENOMIC DNA]</scope>
    <source>
        <strain>MGAS10750</strain>
    </source>
</reference>
<accession>Q1J8E4</accession>
<evidence type="ECO:0000255" key="1">
    <source>
        <dbReference type="HAMAP-Rule" id="MF_01719"/>
    </source>
</evidence>
<proteinExistence type="inferred from homology"/>
<sequence>MNEAIIQLDHIDITFHQKKRVIEAVKDVTVHINQGDIYGIVGYSGAGKSTLVRVINLLQAPTNGKITVDGDVTFDQGKIQLSAEALRQKRRDIGMIFQHFNLMAQKTAKENVAFALRHSSLSKTEKEQKVIELLELVGLSERADNYPAQLSGGQKQRVAIARALANDPKILISDEATSALDPKTTKQILALLQELNRKLGLTIVMITHEMQIVKDICNRVAVMQNGVLIEEGPVLDIFSNPKEALTQEFITTATGIDEALEKINQQDIVKHLPANALLAQLKYAGTSTDEPLLNSIYRQFEVTANILYGNIEILDHIPVGDMIVVLEGQAENILAAEKALHEAGVDVSILKRGA</sequence>
<dbReference type="EC" id="7.4.2.11" evidence="1"/>
<dbReference type="EMBL" id="CP000262">
    <property type="protein sequence ID" value="ABF37217.1"/>
    <property type="molecule type" value="Genomic_DNA"/>
</dbReference>
<dbReference type="SMR" id="Q1J8E4"/>
<dbReference type="KEGG" id="spi:MGAS10750_Spy0267"/>
<dbReference type="HOGENOM" id="CLU_000604_1_3_9"/>
<dbReference type="Proteomes" id="UP000002434">
    <property type="component" value="Chromosome"/>
</dbReference>
<dbReference type="GO" id="GO:0005886">
    <property type="term" value="C:plasma membrane"/>
    <property type="evidence" value="ECO:0007669"/>
    <property type="project" value="UniProtKB-SubCell"/>
</dbReference>
<dbReference type="GO" id="GO:0033232">
    <property type="term" value="F:ABC-type D-methionine transporter activity"/>
    <property type="evidence" value="ECO:0007669"/>
    <property type="project" value="UniProtKB-EC"/>
</dbReference>
<dbReference type="GO" id="GO:0005524">
    <property type="term" value="F:ATP binding"/>
    <property type="evidence" value="ECO:0007669"/>
    <property type="project" value="UniProtKB-KW"/>
</dbReference>
<dbReference type="GO" id="GO:0016887">
    <property type="term" value="F:ATP hydrolysis activity"/>
    <property type="evidence" value="ECO:0007669"/>
    <property type="project" value="InterPro"/>
</dbReference>
<dbReference type="CDD" id="cd03258">
    <property type="entry name" value="ABC_MetN_methionine_transporter"/>
    <property type="match status" value="1"/>
</dbReference>
<dbReference type="Gene3D" id="3.30.70.260">
    <property type="match status" value="1"/>
</dbReference>
<dbReference type="Gene3D" id="3.40.50.300">
    <property type="entry name" value="P-loop containing nucleotide triphosphate hydrolases"/>
    <property type="match status" value="1"/>
</dbReference>
<dbReference type="InterPro" id="IPR003593">
    <property type="entry name" value="AAA+_ATPase"/>
</dbReference>
<dbReference type="InterPro" id="IPR003439">
    <property type="entry name" value="ABC_transporter-like_ATP-bd"/>
</dbReference>
<dbReference type="InterPro" id="IPR017871">
    <property type="entry name" value="ABC_transporter-like_CS"/>
</dbReference>
<dbReference type="InterPro" id="IPR045865">
    <property type="entry name" value="ACT-like_dom_sf"/>
</dbReference>
<dbReference type="InterPro" id="IPR041701">
    <property type="entry name" value="MetN_ABC"/>
</dbReference>
<dbReference type="InterPro" id="IPR050086">
    <property type="entry name" value="MetN_ABC_transporter-like"/>
</dbReference>
<dbReference type="InterPro" id="IPR018449">
    <property type="entry name" value="NIL_domain"/>
</dbReference>
<dbReference type="InterPro" id="IPR027417">
    <property type="entry name" value="P-loop_NTPase"/>
</dbReference>
<dbReference type="PANTHER" id="PTHR43166">
    <property type="entry name" value="AMINO ACID IMPORT ATP-BINDING PROTEIN"/>
    <property type="match status" value="1"/>
</dbReference>
<dbReference type="PANTHER" id="PTHR43166:SF30">
    <property type="entry name" value="METHIONINE IMPORT ATP-BINDING PROTEIN METN"/>
    <property type="match status" value="1"/>
</dbReference>
<dbReference type="Pfam" id="PF00005">
    <property type="entry name" value="ABC_tran"/>
    <property type="match status" value="1"/>
</dbReference>
<dbReference type="Pfam" id="PF09383">
    <property type="entry name" value="NIL"/>
    <property type="match status" value="1"/>
</dbReference>
<dbReference type="SMART" id="SM00382">
    <property type="entry name" value="AAA"/>
    <property type="match status" value="1"/>
</dbReference>
<dbReference type="SMART" id="SM00930">
    <property type="entry name" value="NIL"/>
    <property type="match status" value="1"/>
</dbReference>
<dbReference type="SUPFAM" id="SSF55021">
    <property type="entry name" value="ACT-like"/>
    <property type="match status" value="1"/>
</dbReference>
<dbReference type="SUPFAM" id="SSF52540">
    <property type="entry name" value="P-loop containing nucleoside triphosphate hydrolases"/>
    <property type="match status" value="1"/>
</dbReference>
<dbReference type="PROSITE" id="PS00211">
    <property type="entry name" value="ABC_TRANSPORTER_1"/>
    <property type="match status" value="1"/>
</dbReference>
<dbReference type="PROSITE" id="PS50893">
    <property type="entry name" value="ABC_TRANSPORTER_2"/>
    <property type="match status" value="1"/>
</dbReference>
<dbReference type="PROSITE" id="PS51264">
    <property type="entry name" value="METN"/>
    <property type="match status" value="1"/>
</dbReference>
<feature type="chain" id="PRO_0000270424" description="Methionine import ATP-binding protein MetN">
    <location>
        <begin position="1"/>
        <end position="354"/>
    </location>
</feature>
<feature type="domain" description="ABC transporter" evidence="1">
    <location>
        <begin position="8"/>
        <end position="250"/>
    </location>
</feature>
<feature type="binding site" evidence="1">
    <location>
        <begin position="42"/>
        <end position="49"/>
    </location>
    <ligand>
        <name>ATP</name>
        <dbReference type="ChEBI" id="CHEBI:30616"/>
    </ligand>
</feature>
<comment type="function">
    <text evidence="1">Part of the ABC transporter complex MetNIQ involved in methionine import. Responsible for energy coupling to the transport system.</text>
</comment>
<comment type="catalytic activity">
    <reaction evidence="1">
        <text>L-methionine(out) + ATP + H2O = L-methionine(in) + ADP + phosphate + H(+)</text>
        <dbReference type="Rhea" id="RHEA:29779"/>
        <dbReference type="ChEBI" id="CHEBI:15377"/>
        <dbReference type="ChEBI" id="CHEBI:15378"/>
        <dbReference type="ChEBI" id="CHEBI:30616"/>
        <dbReference type="ChEBI" id="CHEBI:43474"/>
        <dbReference type="ChEBI" id="CHEBI:57844"/>
        <dbReference type="ChEBI" id="CHEBI:456216"/>
        <dbReference type="EC" id="7.4.2.11"/>
    </reaction>
</comment>
<comment type="catalytic activity">
    <reaction evidence="1">
        <text>D-methionine(out) + ATP + H2O = D-methionine(in) + ADP + phosphate + H(+)</text>
        <dbReference type="Rhea" id="RHEA:29767"/>
        <dbReference type="ChEBI" id="CHEBI:15377"/>
        <dbReference type="ChEBI" id="CHEBI:15378"/>
        <dbReference type="ChEBI" id="CHEBI:30616"/>
        <dbReference type="ChEBI" id="CHEBI:43474"/>
        <dbReference type="ChEBI" id="CHEBI:57932"/>
        <dbReference type="ChEBI" id="CHEBI:456216"/>
        <dbReference type="EC" id="7.4.2.11"/>
    </reaction>
</comment>
<comment type="subunit">
    <text evidence="1">The complex is composed of two ATP-binding proteins (MetN), two transmembrane proteins (MetI) and a solute-binding protein (MetQ).</text>
</comment>
<comment type="subcellular location">
    <subcellularLocation>
        <location evidence="1">Cell membrane</location>
        <topology evidence="1">Peripheral membrane protein</topology>
    </subcellularLocation>
</comment>
<comment type="similarity">
    <text evidence="1">Belongs to the ABC transporter superfamily. Methionine importer (TC 3.A.1.24) family.</text>
</comment>
<keyword id="KW-0029">Amino-acid transport</keyword>
<keyword id="KW-0067">ATP-binding</keyword>
<keyword id="KW-1003">Cell membrane</keyword>
<keyword id="KW-0472">Membrane</keyword>
<keyword id="KW-0547">Nucleotide-binding</keyword>
<keyword id="KW-1278">Translocase</keyword>
<keyword id="KW-0813">Transport</keyword>
<protein>
    <recommendedName>
        <fullName evidence="1">Methionine import ATP-binding protein MetN</fullName>
        <ecNumber evidence="1">7.4.2.11</ecNumber>
    </recommendedName>
</protein>
<gene>
    <name evidence="1" type="primary">metN</name>
    <name type="ordered locus">MGAS10750_Spy0267</name>
</gene>
<name>METN_STRPF</name>
<organism>
    <name type="scientific">Streptococcus pyogenes serotype M4 (strain MGAS10750)</name>
    <dbReference type="NCBI Taxonomy" id="370554"/>
    <lineage>
        <taxon>Bacteria</taxon>
        <taxon>Bacillati</taxon>
        <taxon>Bacillota</taxon>
        <taxon>Bacilli</taxon>
        <taxon>Lactobacillales</taxon>
        <taxon>Streptococcaceae</taxon>
        <taxon>Streptococcus</taxon>
    </lineage>
</organism>